<protein>
    <recommendedName>
        <fullName evidence="1">DNA-binding protein Fis</fullName>
    </recommendedName>
</protein>
<name>FIS_SALTI</name>
<proteinExistence type="inferred from homology"/>
<reference key="1">
    <citation type="journal article" date="2001" name="Nature">
        <title>Complete genome sequence of a multiple drug resistant Salmonella enterica serovar Typhi CT18.</title>
        <authorList>
            <person name="Parkhill J."/>
            <person name="Dougan G."/>
            <person name="James K.D."/>
            <person name="Thomson N.R."/>
            <person name="Pickard D."/>
            <person name="Wain J."/>
            <person name="Churcher C.M."/>
            <person name="Mungall K.L."/>
            <person name="Bentley S.D."/>
            <person name="Holden M.T.G."/>
            <person name="Sebaihia M."/>
            <person name="Baker S."/>
            <person name="Basham D."/>
            <person name="Brooks K."/>
            <person name="Chillingworth T."/>
            <person name="Connerton P."/>
            <person name="Cronin A."/>
            <person name="Davis P."/>
            <person name="Davies R.M."/>
            <person name="Dowd L."/>
            <person name="White N."/>
            <person name="Farrar J."/>
            <person name="Feltwell T."/>
            <person name="Hamlin N."/>
            <person name="Haque A."/>
            <person name="Hien T.T."/>
            <person name="Holroyd S."/>
            <person name="Jagels K."/>
            <person name="Krogh A."/>
            <person name="Larsen T.S."/>
            <person name="Leather S."/>
            <person name="Moule S."/>
            <person name="O'Gaora P."/>
            <person name="Parry C."/>
            <person name="Quail M.A."/>
            <person name="Rutherford K.M."/>
            <person name="Simmonds M."/>
            <person name="Skelton J."/>
            <person name="Stevens K."/>
            <person name="Whitehead S."/>
            <person name="Barrell B.G."/>
        </authorList>
    </citation>
    <scope>NUCLEOTIDE SEQUENCE [LARGE SCALE GENOMIC DNA]</scope>
    <source>
        <strain>CT18</strain>
    </source>
</reference>
<reference key="2">
    <citation type="journal article" date="2003" name="J. Bacteriol.">
        <title>Comparative genomics of Salmonella enterica serovar Typhi strains Ty2 and CT18.</title>
        <authorList>
            <person name="Deng W."/>
            <person name="Liou S.-R."/>
            <person name="Plunkett G. III"/>
            <person name="Mayhew G.F."/>
            <person name="Rose D.J."/>
            <person name="Burland V."/>
            <person name="Kodoyianni V."/>
            <person name="Schwartz D.C."/>
            <person name="Blattner F.R."/>
        </authorList>
    </citation>
    <scope>NUCLEOTIDE SEQUENCE [LARGE SCALE GENOMIC DNA]</scope>
    <source>
        <strain>ATCC 700931 / Ty2</strain>
    </source>
</reference>
<evidence type="ECO:0000255" key="1">
    <source>
        <dbReference type="HAMAP-Rule" id="MF_00166"/>
    </source>
</evidence>
<dbReference type="EMBL" id="AL513382">
    <property type="protein sequence ID" value="CAD07900.1"/>
    <property type="molecule type" value="Genomic_DNA"/>
</dbReference>
<dbReference type="EMBL" id="AE014613">
    <property type="protein sequence ID" value="AAO70835.1"/>
    <property type="molecule type" value="Genomic_DNA"/>
</dbReference>
<dbReference type="RefSeq" id="NP_457761.1">
    <property type="nucleotide sequence ID" value="NC_003198.1"/>
</dbReference>
<dbReference type="RefSeq" id="WP_000462905.1">
    <property type="nucleotide sequence ID" value="NZ_WSUR01000038.1"/>
</dbReference>
<dbReference type="SMR" id="P0A6R7"/>
<dbReference type="STRING" id="220341.gene:17587413"/>
<dbReference type="GeneID" id="98390389"/>
<dbReference type="KEGG" id="stt:t3300"/>
<dbReference type="KEGG" id="sty:STY3565"/>
<dbReference type="PATRIC" id="fig|220341.7.peg.3630"/>
<dbReference type="eggNOG" id="COG2901">
    <property type="taxonomic scope" value="Bacteria"/>
</dbReference>
<dbReference type="HOGENOM" id="CLU_158040_3_0_6"/>
<dbReference type="OMA" id="LCEVEAP"/>
<dbReference type="OrthoDB" id="9802388at2"/>
<dbReference type="Proteomes" id="UP000000541">
    <property type="component" value="Chromosome"/>
</dbReference>
<dbReference type="Proteomes" id="UP000002670">
    <property type="component" value="Chromosome"/>
</dbReference>
<dbReference type="GO" id="GO:0003700">
    <property type="term" value="F:DNA-binding transcription factor activity"/>
    <property type="evidence" value="ECO:0007669"/>
    <property type="project" value="UniProtKB-UniRule"/>
</dbReference>
<dbReference type="GO" id="GO:0043565">
    <property type="term" value="F:sequence-specific DNA binding"/>
    <property type="evidence" value="ECO:0007669"/>
    <property type="project" value="InterPro"/>
</dbReference>
<dbReference type="FunFam" id="1.10.10.60:FF:000006">
    <property type="entry name" value="DNA-binding protein Fis"/>
    <property type="match status" value="1"/>
</dbReference>
<dbReference type="Gene3D" id="1.10.10.60">
    <property type="entry name" value="Homeodomain-like"/>
    <property type="match status" value="1"/>
</dbReference>
<dbReference type="HAMAP" id="MF_00166">
    <property type="entry name" value="DNA_binding_Fis"/>
    <property type="match status" value="1"/>
</dbReference>
<dbReference type="InterPro" id="IPR005412">
    <property type="entry name" value="Fis_DNA-bd"/>
</dbReference>
<dbReference type="InterPro" id="IPR009057">
    <property type="entry name" value="Homeodomain-like_sf"/>
</dbReference>
<dbReference type="InterPro" id="IPR002197">
    <property type="entry name" value="HTH_Fis"/>
</dbReference>
<dbReference type="InterPro" id="IPR050207">
    <property type="entry name" value="Trans_regulatory_Fis"/>
</dbReference>
<dbReference type="NCBIfam" id="NF001659">
    <property type="entry name" value="PRK00430.1"/>
    <property type="match status" value="1"/>
</dbReference>
<dbReference type="PANTHER" id="PTHR47918">
    <property type="entry name" value="DNA-BINDING PROTEIN FIS"/>
    <property type="match status" value="1"/>
</dbReference>
<dbReference type="PANTHER" id="PTHR47918:SF1">
    <property type="entry name" value="DNA-BINDING PROTEIN FIS"/>
    <property type="match status" value="1"/>
</dbReference>
<dbReference type="Pfam" id="PF02954">
    <property type="entry name" value="HTH_8"/>
    <property type="match status" value="1"/>
</dbReference>
<dbReference type="PIRSF" id="PIRSF002097">
    <property type="entry name" value="DNA-binding_Fis"/>
    <property type="match status" value="1"/>
</dbReference>
<dbReference type="PRINTS" id="PR01591">
    <property type="entry name" value="DNABINDNGFIS"/>
</dbReference>
<dbReference type="PRINTS" id="PR01590">
    <property type="entry name" value="HTHFIS"/>
</dbReference>
<dbReference type="SUPFAM" id="SSF46689">
    <property type="entry name" value="Homeodomain-like"/>
    <property type="match status" value="1"/>
</dbReference>
<organism>
    <name type="scientific">Salmonella typhi</name>
    <dbReference type="NCBI Taxonomy" id="90370"/>
    <lineage>
        <taxon>Bacteria</taxon>
        <taxon>Pseudomonadati</taxon>
        <taxon>Pseudomonadota</taxon>
        <taxon>Gammaproteobacteria</taxon>
        <taxon>Enterobacterales</taxon>
        <taxon>Enterobacteriaceae</taxon>
        <taxon>Salmonella</taxon>
    </lineage>
</organism>
<sequence length="98" mass="11240">MFEQRVNSDVLTVSTVNSQDQVTQKPLRDSVKQALKNYFAQLNGQDVNDLYELVLAEVEQPLLDMVMQYTRGNQTRAALMMGINRGTLRKKLKKYGMN</sequence>
<feature type="chain" id="PRO_0000203893" description="DNA-binding protein Fis">
    <location>
        <begin position="1"/>
        <end position="98"/>
    </location>
</feature>
<feature type="DNA-binding region" description="H-T-H motif" evidence="1">
    <location>
        <begin position="74"/>
        <end position="93"/>
    </location>
</feature>
<gene>
    <name evidence="1" type="primary">fis</name>
    <name type="ordered locus">STY3565</name>
    <name type="ordered locus">t3300</name>
</gene>
<keyword id="KW-0010">Activator</keyword>
<keyword id="KW-0238">DNA-binding</keyword>
<keyword id="KW-0804">Transcription</keyword>
<keyword id="KW-0805">Transcription regulation</keyword>
<accession>P0A6R7</accession>
<accession>P11028</accession>
<accession>P37404</accession>
<comment type="function">
    <text evidence="1">Activates ribosomal RNA transcription. Plays a direct role in upstream activation of rRNA promoters.</text>
</comment>
<comment type="subunit">
    <text evidence="1">Homodimer.</text>
</comment>
<comment type="similarity">
    <text evidence="1">Belongs to the transcriptional regulatory Fis family.</text>
</comment>